<evidence type="ECO:0000255" key="1">
    <source>
        <dbReference type="HAMAP-Rule" id="MF_01595"/>
    </source>
</evidence>
<name>PNP_XANOM</name>
<gene>
    <name evidence="1" type="primary">pnp</name>
    <name type="ordered locus">XOO3047</name>
</gene>
<sequence>MAKITKTFQYGKHTVTLETGEIARQAGGAVIVKFDDTVLLVTAVAAKSAREGQDFFPLTVDYQEKFYAGGRIPGGFFKREGRATEKETLISRLIDRPIRPLFPEDYKNEVQIIATVMSMNPDIDGDIAALIGASAALSLAGTPFNGPIAAAKVGYKNGEYILNPTVTDLKDSQLELVVAGTANAVLMVESEAELLSEEVMLGAVTFGHREMQKVINIINELAVEAGTKPSDWVAPAKNDGMIAALKEAVGDQLASAFQVRDKLQRRDAISAIKKDVLGALAPRATIEGWAAGDLAKEFGELEYQTMRGSVLSTKVRIDGRALDTVRPISAKAGVLPRTHGSALFTRGETQAIVITTLGTARDGQVIDAVSGEYKENFLFHYNFPPYSVGECGRFGAPKRREIGHGRLAKRGVLAVMPSLEEFPYTIRVVSEITESNGSSSMASVCGSSLALMDAGVPIKAPVAGIAMGLVKEGNDFVVLSDILGDEDHLGDMDFKVAGTAEGVSALQMDIKIEGITEEIMKQALQQAKAGRLHILGEMAHALTTPRQELSDYAPRLLTIKIHPDKIREVIGKGGSTIQAITKETGTQIDIQDDGTIIIASVNAIAAQAAKSRIEQITSDVEPGRIYEGKVAKIMDFGAFVTILPGKDGLVHVSQISSERVEKVGDKLKEGDLVRVKVLEVDKQGRIRLSIKAVEEGEGVPASAE</sequence>
<accession>Q2P0X5</accession>
<reference key="1">
    <citation type="journal article" date="2005" name="Jpn. Agric. Res. Q.">
        <title>Genome sequence of Xanthomonas oryzae pv. oryzae suggests contribution of large numbers of effector genes and insertion sequences to its race diversity.</title>
        <authorList>
            <person name="Ochiai H."/>
            <person name="Inoue Y."/>
            <person name="Takeya M."/>
            <person name="Sasaki A."/>
            <person name="Kaku H."/>
        </authorList>
    </citation>
    <scope>NUCLEOTIDE SEQUENCE [LARGE SCALE GENOMIC DNA]</scope>
    <source>
        <strain>MAFF 311018</strain>
    </source>
</reference>
<feature type="chain" id="PRO_0000329943" description="Polyribonucleotide nucleotidyltransferase">
    <location>
        <begin position="1"/>
        <end position="704"/>
    </location>
</feature>
<feature type="domain" description="KH" evidence="1">
    <location>
        <begin position="554"/>
        <end position="613"/>
    </location>
</feature>
<feature type="domain" description="S1 motif" evidence="1">
    <location>
        <begin position="623"/>
        <end position="691"/>
    </location>
</feature>
<feature type="binding site" evidence="1">
    <location>
        <position position="487"/>
    </location>
    <ligand>
        <name>Mg(2+)</name>
        <dbReference type="ChEBI" id="CHEBI:18420"/>
    </ligand>
</feature>
<feature type="binding site" evidence="1">
    <location>
        <position position="493"/>
    </location>
    <ligand>
        <name>Mg(2+)</name>
        <dbReference type="ChEBI" id="CHEBI:18420"/>
    </ligand>
</feature>
<comment type="function">
    <text evidence="1">Involved in mRNA degradation. Catalyzes the phosphorolysis of single-stranded polyribonucleotides processively in the 3'- to 5'-direction.</text>
</comment>
<comment type="catalytic activity">
    <reaction evidence="1">
        <text>RNA(n+1) + phosphate = RNA(n) + a ribonucleoside 5'-diphosphate</text>
        <dbReference type="Rhea" id="RHEA:22096"/>
        <dbReference type="Rhea" id="RHEA-COMP:14527"/>
        <dbReference type="Rhea" id="RHEA-COMP:17342"/>
        <dbReference type="ChEBI" id="CHEBI:43474"/>
        <dbReference type="ChEBI" id="CHEBI:57930"/>
        <dbReference type="ChEBI" id="CHEBI:140395"/>
        <dbReference type="EC" id="2.7.7.8"/>
    </reaction>
</comment>
<comment type="cofactor">
    <cofactor evidence="1">
        <name>Mg(2+)</name>
        <dbReference type="ChEBI" id="CHEBI:18420"/>
    </cofactor>
</comment>
<comment type="subunit">
    <text evidence="1">Component of the RNA degradosome, which is a multiprotein complex involved in RNA processing and mRNA degradation.</text>
</comment>
<comment type="subcellular location">
    <subcellularLocation>
        <location evidence="1">Cytoplasm</location>
    </subcellularLocation>
</comment>
<comment type="similarity">
    <text evidence="1">Belongs to the polyribonucleotide nucleotidyltransferase family.</text>
</comment>
<organism>
    <name type="scientific">Xanthomonas oryzae pv. oryzae (strain MAFF 311018)</name>
    <dbReference type="NCBI Taxonomy" id="342109"/>
    <lineage>
        <taxon>Bacteria</taxon>
        <taxon>Pseudomonadati</taxon>
        <taxon>Pseudomonadota</taxon>
        <taxon>Gammaproteobacteria</taxon>
        <taxon>Lysobacterales</taxon>
        <taxon>Lysobacteraceae</taxon>
        <taxon>Xanthomonas</taxon>
    </lineage>
</organism>
<protein>
    <recommendedName>
        <fullName evidence="1">Polyribonucleotide nucleotidyltransferase</fullName>
        <ecNumber evidence="1">2.7.7.8</ecNumber>
    </recommendedName>
    <alternativeName>
        <fullName evidence="1">Polynucleotide phosphorylase</fullName>
        <shortName evidence="1">PNPase</shortName>
    </alternativeName>
</protein>
<keyword id="KW-0963">Cytoplasm</keyword>
<keyword id="KW-0460">Magnesium</keyword>
<keyword id="KW-0479">Metal-binding</keyword>
<keyword id="KW-0548">Nucleotidyltransferase</keyword>
<keyword id="KW-0694">RNA-binding</keyword>
<keyword id="KW-0808">Transferase</keyword>
<dbReference type="EC" id="2.7.7.8" evidence="1"/>
<dbReference type="EMBL" id="AP008229">
    <property type="protein sequence ID" value="BAE69802.1"/>
    <property type="molecule type" value="Genomic_DNA"/>
</dbReference>
<dbReference type="RefSeq" id="WP_011259733.1">
    <property type="nucleotide sequence ID" value="NC_007705.1"/>
</dbReference>
<dbReference type="SMR" id="Q2P0X5"/>
<dbReference type="KEGG" id="xom:XOO3047"/>
<dbReference type="HOGENOM" id="CLU_004217_2_2_6"/>
<dbReference type="GO" id="GO:0005829">
    <property type="term" value="C:cytosol"/>
    <property type="evidence" value="ECO:0007669"/>
    <property type="project" value="TreeGrafter"/>
</dbReference>
<dbReference type="GO" id="GO:0000175">
    <property type="term" value="F:3'-5'-RNA exonuclease activity"/>
    <property type="evidence" value="ECO:0007669"/>
    <property type="project" value="TreeGrafter"/>
</dbReference>
<dbReference type="GO" id="GO:0000287">
    <property type="term" value="F:magnesium ion binding"/>
    <property type="evidence" value="ECO:0007669"/>
    <property type="project" value="UniProtKB-UniRule"/>
</dbReference>
<dbReference type="GO" id="GO:0004654">
    <property type="term" value="F:polyribonucleotide nucleotidyltransferase activity"/>
    <property type="evidence" value="ECO:0007669"/>
    <property type="project" value="UniProtKB-UniRule"/>
</dbReference>
<dbReference type="GO" id="GO:0003723">
    <property type="term" value="F:RNA binding"/>
    <property type="evidence" value="ECO:0007669"/>
    <property type="project" value="UniProtKB-UniRule"/>
</dbReference>
<dbReference type="GO" id="GO:0006402">
    <property type="term" value="P:mRNA catabolic process"/>
    <property type="evidence" value="ECO:0007669"/>
    <property type="project" value="UniProtKB-UniRule"/>
</dbReference>
<dbReference type="GO" id="GO:0006396">
    <property type="term" value="P:RNA processing"/>
    <property type="evidence" value="ECO:0007669"/>
    <property type="project" value="InterPro"/>
</dbReference>
<dbReference type="CDD" id="cd02393">
    <property type="entry name" value="KH-I_PNPase"/>
    <property type="match status" value="1"/>
</dbReference>
<dbReference type="CDD" id="cd11363">
    <property type="entry name" value="RNase_PH_PNPase_1"/>
    <property type="match status" value="1"/>
</dbReference>
<dbReference type="CDD" id="cd11364">
    <property type="entry name" value="RNase_PH_PNPase_2"/>
    <property type="match status" value="1"/>
</dbReference>
<dbReference type="CDD" id="cd04472">
    <property type="entry name" value="S1_PNPase"/>
    <property type="match status" value="1"/>
</dbReference>
<dbReference type="FunFam" id="2.40.50.140:FF:000023">
    <property type="entry name" value="Polyribonucleotide nucleotidyltransferase"/>
    <property type="match status" value="1"/>
</dbReference>
<dbReference type="FunFam" id="3.30.1370.10:FF:000001">
    <property type="entry name" value="Polyribonucleotide nucleotidyltransferase"/>
    <property type="match status" value="1"/>
</dbReference>
<dbReference type="FunFam" id="3.30.230.70:FF:000001">
    <property type="entry name" value="Polyribonucleotide nucleotidyltransferase"/>
    <property type="match status" value="1"/>
</dbReference>
<dbReference type="FunFam" id="3.30.230.70:FF:000002">
    <property type="entry name" value="Polyribonucleotide nucleotidyltransferase"/>
    <property type="match status" value="1"/>
</dbReference>
<dbReference type="Gene3D" id="3.30.230.70">
    <property type="entry name" value="GHMP Kinase, N-terminal domain"/>
    <property type="match status" value="2"/>
</dbReference>
<dbReference type="Gene3D" id="3.30.1370.10">
    <property type="entry name" value="K Homology domain, type 1"/>
    <property type="match status" value="1"/>
</dbReference>
<dbReference type="Gene3D" id="2.40.50.140">
    <property type="entry name" value="Nucleic acid-binding proteins"/>
    <property type="match status" value="1"/>
</dbReference>
<dbReference type="HAMAP" id="MF_01595">
    <property type="entry name" value="PNPase"/>
    <property type="match status" value="1"/>
</dbReference>
<dbReference type="InterPro" id="IPR001247">
    <property type="entry name" value="ExoRNase_PH_dom1"/>
</dbReference>
<dbReference type="InterPro" id="IPR015847">
    <property type="entry name" value="ExoRNase_PH_dom2"/>
</dbReference>
<dbReference type="InterPro" id="IPR036345">
    <property type="entry name" value="ExoRNase_PH_dom2_sf"/>
</dbReference>
<dbReference type="InterPro" id="IPR004087">
    <property type="entry name" value="KH_dom"/>
</dbReference>
<dbReference type="InterPro" id="IPR004088">
    <property type="entry name" value="KH_dom_type_1"/>
</dbReference>
<dbReference type="InterPro" id="IPR036612">
    <property type="entry name" value="KH_dom_type_1_sf"/>
</dbReference>
<dbReference type="InterPro" id="IPR012340">
    <property type="entry name" value="NA-bd_OB-fold"/>
</dbReference>
<dbReference type="InterPro" id="IPR012162">
    <property type="entry name" value="PNPase"/>
</dbReference>
<dbReference type="InterPro" id="IPR027408">
    <property type="entry name" value="PNPase/RNase_PH_dom_sf"/>
</dbReference>
<dbReference type="InterPro" id="IPR015848">
    <property type="entry name" value="PNPase_PH_RNA-bd_bac/org-type"/>
</dbReference>
<dbReference type="InterPro" id="IPR036456">
    <property type="entry name" value="PNPase_PH_RNA-bd_sf"/>
</dbReference>
<dbReference type="InterPro" id="IPR020568">
    <property type="entry name" value="Ribosomal_Su5_D2-typ_SF"/>
</dbReference>
<dbReference type="InterPro" id="IPR003029">
    <property type="entry name" value="S1_domain"/>
</dbReference>
<dbReference type="NCBIfam" id="TIGR03591">
    <property type="entry name" value="polynuc_phos"/>
    <property type="match status" value="1"/>
</dbReference>
<dbReference type="NCBIfam" id="NF008805">
    <property type="entry name" value="PRK11824.1"/>
    <property type="match status" value="1"/>
</dbReference>
<dbReference type="PANTHER" id="PTHR11252">
    <property type="entry name" value="POLYRIBONUCLEOTIDE NUCLEOTIDYLTRANSFERASE"/>
    <property type="match status" value="1"/>
</dbReference>
<dbReference type="PANTHER" id="PTHR11252:SF0">
    <property type="entry name" value="POLYRIBONUCLEOTIDE NUCLEOTIDYLTRANSFERASE 1, MITOCHONDRIAL"/>
    <property type="match status" value="1"/>
</dbReference>
<dbReference type="Pfam" id="PF00013">
    <property type="entry name" value="KH_1"/>
    <property type="match status" value="1"/>
</dbReference>
<dbReference type="Pfam" id="PF03726">
    <property type="entry name" value="PNPase"/>
    <property type="match status" value="1"/>
</dbReference>
<dbReference type="Pfam" id="PF01138">
    <property type="entry name" value="RNase_PH"/>
    <property type="match status" value="2"/>
</dbReference>
<dbReference type="Pfam" id="PF03725">
    <property type="entry name" value="RNase_PH_C"/>
    <property type="match status" value="2"/>
</dbReference>
<dbReference type="Pfam" id="PF00575">
    <property type="entry name" value="S1"/>
    <property type="match status" value="1"/>
</dbReference>
<dbReference type="PIRSF" id="PIRSF005499">
    <property type="entry name" value="PNPase"/>
    <property type="match status" value="1"/>
</dbReference>
<dbReference type="SMART" id="SM00322">
    <property type="entry name" value="KH"/>
    <property type="match status" value="1"/>
</dbReference>
<dbReference type="SMART" id="SM00316">
    <property type="entry name" value="S1"/>
    <property type="match status" value="1"/>
</dbReference>
<dbReference type="SUPFAM" id="SSF54791">
    <property type="entry name" value="Eukaryotic type KH-domain (KH-domain type I)"/>
    <property type="match status" value="1"/>
</dbReference>
<dbReference type="SUPFAM" id="SSF50249">
    <property type="entry name" value="Nucleic acid-binding proteins"/>
    <property type="match status" value="1"/>
</dbReference>
<dbReference type="SUPFAM" id="SSF46915">
    <property type="entry name" value="Polynucleotide phosphorylase/guanosine pentaphosphate synthase (PNPase/GPSI), domain 3"/>
    <property type="match status" value="1"/>
</dbReference>
<dbReference type="SUPFAM" id="SSF55666">
    <property type="entry name" value="Ribonuclease PH domain 2-like"/>
    <property type="match status" value="2"/>
</dbReference>
<dbReference type="SUPFAM" id="SSF54211">
    <property type="entry name" value="Ribosomal protein S5 domain 2-like"/>
    <property type="match status" value="2"/>
</dbReference>
<dbReference type="PROSITE" id="PS50084">
    <property type="entry name" value="KH_TYPE_1"/>
    <property type="match status" value="1"/>
</dbReference>
<dbReference type="PROSITE" id="PS50126">
    <property type="entry name" value="S1"/>
    <property type="match status" value="1"/>
</dbReference>
<proteinExistence type="inferred from homology"/>